<protein>
    <recommendedName>
        <fullName evidence="5">GILT-like protein 1</fullName>
    </recommendedName>
</protein>
<keyword id="KW-0325">Glycoprotein</keyword>
<keyword id="KW-0391">Immunity</keyword>
<keyword id="KW-1185">Reference proteome</keyword>
<keyword id="KW-0964">Secreted</keyword>
<keyword id="KW-0732">Signal</keyword>
<keyword id="KW-0832">Ubl conjugation</keyword>
<reference evidence="9" key="1">
    <citation type="journal article" date="2000" name="Science">
        <title>The genome sequence of Drosophila melanogaster.</title>
        <authorList>
            <person name="Adams M.D."/>
            <person name="Celniker S.E."/>
            <person name="Holt R.A."/>
            <person name="Evans C.A."/>
            <person name="Gocayne J.D."/>
            <person name="Amanatides P.G."/>
            <person name="Scherer S.E."/>
            <person name="Li P.W."/>
            <person name="Hoskins R.A."/>
            <person name="Galle R.F."/>
            <person name="George R.A."/>
            <person name="Lewis S.E."/>
            <person name="Richards S."/>
            <person name="Ashburner M."/>
            <person name="Henderson S.N."/>
            <person name="Sutton G.G."/>
            <person name="Wortman J.R."/>
            <person name="Yandell M.D."/>
            <person name="Zhang Q."/>
            <person name="Chen L.X."/>
            <person name="Brandon R.C."/>
            <person name="Rogers Y.-H.C."/>
            <person name="Blazej R.G."/>
            <person name="Champe M."/>
            <person name="Pfeiffer B.D."/>
            <person name="Wan K.H."/>
            <person name="Doyle C."/>
            <person name="Baxter E.G."/>
            <person name="Helt G."/>
            <person name="Nelson C.R."/>
            <person name="Miklos G.L.G."/>
            <person name="Abril J.F."/>
            <person name="Agbayani A."/>
            <person name="An H.-J."/>
            <person name="Andrews-Pfannkoch C."/>
            <person name="Baldwin D."/>
            <person name="Ballew R.M."/>
            <person name="Basu A."/>
            <person name="Baxendale J."/>
            <person name="Bayraktaroglu L."/>
            <person name="Beasley E.M."/>
            <person name="Beeson K.Y."/>
            <person name="Benos P.V."/>
            <person name="Berman B.P."/>
            <person name="Bhandari D."/>
            <person name="Bolshakov S."/>
            <person name="Borkova D."/>
            <person name="Botchan M.R."/>
            <person name="Bouck J."/>
            <person name="Brokstein P."/>
            <person name="Brottier P."/>
            <person name="Burtis K.C."/>
            <person name="Busam D.A."/>
            <person name="Butler H."/>
            <person name="Cadieu E."/>
            <person name="Center A."/>
            <person name="Chandra I."/>
            <person name="Cherry J.M."/>
            <person name="Cawley S."/>
            <person name="Dahlke C."/>
            <person name="Davenport L.B."/>
            <person name="Davies P."/>
            <person name="de Pablos B."/>
            <person name="Delcher A."/>
            <person name="Deng Z."/>
            <person name="Mays A.D."/>
            <person name="Dew I."/>
            <person name="Dietz S.M."/>
            <person name="Dodson K."/>
            <person name="Doup L.E."/>
            <person name="Downes M."/>
            <person name="Dugan-Rocha S."/>
            <person name="Dunkov B.C."/>
            <person name="Dunn P."/>
            <person name="Durbin K.J."/>
            <person name="Evangelista C.C."/>
            <person name="Ferraz C."/>
            <person name="Ferriera S."/>
            <person name="Fleischmann W."/>
            <person name="Fosler C."/>
            <person name="Gabrielian A.E."/>
            <person name="Garg N.S."/>
            <person name="Gelbart W.M."/>
            <person name="Glasser K."/>
            <person name="Glodek A."/>
            <person name="Gong F."/>
            <person name="Gorrell J.H."/>
            <person name="Gu Z."/>
            <person name="Guan P."/>
            <person name="Harris M."/>
            <person name="Harris N.L."/>
            <person name="Harvey D.A."/>
            <person name="Heiman T.J."/>
            <person name="Hernandez J.R."/>
            <person name="Houck J."/>
            <person name="Hostin D."/>
            <person name="Houston K.A."/>
            <person name="Howland T.J."/>
            <person name="Wei M.-H."/>
            <person name="Ibegwam C."/>
            <person name="Jalali M."/>
            <person name="Kalush F."/>
            <person name="Karpen G.H."/>
            <person name="Ke Z."/>
            <person name="Kennison J.A."/>
            <person name="Ketchum K.A."/>
            <person name="Kimmel B.E."/>
            <person name="Kodira C.D."/>
            <person name="Kraft C.L."/>
            <person name="Kravitz S."/>
            <person name="Kulp D."/>
            <person name="Lai Z."/>
            <person name="Lasko P."/>
            <person name="Lei Y."/>
            <person name="Levitsky A.A."/>
            <person name="Li J.H."/>
            <person name="Li Z."/>
            <person name="Liang Y."/>
            <person name="Lin X."/>
            <person name="Liu X."/>
            <person name="Mattei B."/>
            <person name="McIntosh T.C."/>
            <person name="McLeod M.P."/>
            <person name="McPherson D."/>
            <person name="Merkulov G."/>
            <person name="Milshina N.V."/>
            <person name="Mobarry C."/>
            <person name="Morris J."/>
            <person name="Moshrefi A."/>
            <person name="Mount S.M."/>
            <person name="Moy M."/>
            <person name="Murphy B."/>
            <person name="Murphy L."/>
            <person name="Muzny D.M."/>
            <person name="Nelson D.L."/>
            <person name="Nelson D.R."/>
            <person name="Nelson K.A."/>
            <person name="Nixon K."/>
            <person name="Nusskern D.R."/>
            <person name="Pacleb J.M."/>
            <person name="Palazzolo M."/>
            <person name="Pittman G.S."/>
            <person name="Pan S."/>
            <person name="Pollard J."/>
            <person name="Puri V."/>
            <person name="Reese M.G."/>
            <person name="Reinert K."/>
            <person name="Remington K."/>
            <person name="Saunders R.D.C."/>
            <person name="Scheeler F."/>
            <person name="Shen H."/>
            <person name="Shue B.C."/>
            <person name="Siden-Kiamos I."/>
            <person name="Simpson M."/>
            <person name="Skupski M.P."/>
            <person name="Smith T.J."/>
            <person name="Spier E."/>
            <person name="Spradling A.C."/>
            <person name="Stapleton M."/>
            <person name="Strong R."/>
            <person name="Sun E."/>
            <person name="Svirskas R."/>
            <person name="Tector C."/>
            <person name="Turner R."/>
            <person name="Venter E."/>
            <person name="Wang A.H."/>
            <person name="Wang X."/>
            <person name="Wang Z.-Y."/>
            <person name="Wassarman D.A."/>
            <person name="Weinstock G.M."/>
            <person name="Weissenbach J."/>
            <person name="Williams S.M."/>
            <person name="Woodage T."/>
            <person name="Worley K.C."/>
            <person name="Wu D."/>
            <person name="Yang S."/>
            <person name="Yao Q.A."/>
            <person name="Ye J."/>
            <person name="Yeh R.-F."/>
            <person name="Zaveri J.S."/>
            <person name="Zhan M."/>
            <person name="Zhang G."/>
            <person name="Zhao Q."/>
            <person name="Zheng L."/>
            <person name="Zheng X.H."/>
            <person name="Zhong F.N."/>
            <person name="Zhong W."/>
            <person name="Zhou X."/>
            <person name="Zhu S.C."/>
            <person name="Zhu X."/>
            <person name="Smith H.O."/>
            <person name="Gibbs R.A."/>
            <person name="Myers E.W."/>
            <person name="Rubin G.M."/>
            <person name="Venter J.C."/>
        </authorList>
    </citation>
    <scope>NUCLEOTIDE SEQUENCE [LARGE SCALE GENOMIC DNA]</scope>
    <source>
        <strain evidence="9">Berkeley</strain>
    </source>
</reference>
<reference evidence="9" key="2">
    <citation type="journal article" date="2002" name="Genome Biol.">
        <title>Annotation of the Drosophila melanogaster euchromatic genome: a systematic review.</title>
        <authorList>
            <person name="Misra S."/>
            <person name="Crosby M.A."/>
            <person name="Mungall C.J."/>
            <person name="Matthews B.B."/>
            <person name="Campbell K.S."/>
            <person name="Hradecky P."/>
            <person name="Huang Y."/>
            <person name="Kaminker J.S."/>
            <person name="Millburn G.H."/>
            <person name="Prochnik S.E."/>
            <person name="Smith C.D."/>
            <person name="Tupy J.L."/>
            <person name="Whitfield E.J."/>
            <person name="Bayraktaroglu L."/>
            <person name="Berman B.P."/>
            <person name="Bettencourt B.R."/>
            <person name="Celniker S.E."/>
            <person name="de Grey A.D.N.J."/>
            <person name="Drysdale R.A."/>
            <person name="Harris N.L."/>
            <person name="Richter J."/>
            <person name="Russo S."/>
            <person name="Schroeder A.J."/>
            <person name="Shu S.Q."/>
            <person name="Stapleton M."/>
            <person name="Yamada C."/>
            <person name="Ashburner M."/>
            <person name="Gelbart W.M."/>
            <person name="Rubin G.M."/>
            <person name="Lewis S.E."/>
        </authorList>
    </citation>
    <scope>GENOME REANNOTATION</scope>
    <source>
        <strain evidence="9">Berkeley</strain>
    </source>
</reference>
<reference evidence="7" key="3">
    <citation type="submission" date="2003-03" db="EMBL/GenBank/DDBJ databases">
        <authorList>
            <person name="Stapleton M."/>
            <person name="Brokstein P."/>
            <person name="Hong L."/>
            <person name="Agbayani A."/>
            <person name="Carlson J."/>
            <person name="Champe M."/>
            <person name="Chavez C."/>
            <person name="Dorsett V."/>
            <person name="Dresnek D."/>
            <person name="Farfan D."/>
            <person name="Frise E."/>
            <person name="George R."/>
            <person name="Gonzalez M."/>
            <person name="Guarin H."/>
            <person name="Kronmiller B."/>
            <person name="Li P."/>
            <person name="Liao G."/>
            <person name="Miranda A."/>
            <person name="Mungall C.J."/>
            <person name="Nunoo J."/>
            <person name="Pacleb J."/>
            <person name="Paragas V."/>
            <person name="Park S."/>
            <person name="Patel S."/>
            <person name="Phouanenavong S."/>
            <person name="Wan K."/>
            <person name="Yu C."/>
            <person name="Lewis S.E."/>
            <person name="Rubin G.M."/>
            <person name="Celniker S."/>
        </authorList>
    </citation>
    <scope>NUCLEOTIDE SEQUENCE [LARGE SCALE MRNA]</scope>
    <source>
        <strain evidence="7">Berkeley</strain>
        <tissue evidence="7">Embryo</tissue>
    </source>
</reference>
<reference evidence="5" key="4">
    <citation type="journal article" date="2014" name="Dev. Comp. Immunol.">
        <title>Identification of gamma-interferon-inducible lysosomal thiol reductase (GILT) homologues in the fruit fly Drosophila melanogaster.</title>
        <authorList>
            <person name="Kongton K."/>
            <person name="McCall K."/>
            <person name="Phongdara A."/>
        </authorList>
    </citation>
    <scope>FUNCTION</scope>
    <scope>INDUCTION</scope>
    <scope>DISRUPTION PHENOTYPE</scope>
</reference>
<reference key="5">
    <citation type="journal article" date="2017" name="PLoS ONE">
        <title>A proteomics approach to identify targets of the ubiquitin-like molecule Urm1 in Drosophila melanogaster.</title>
        <authorList>
            <person name="Khoshnood B."/>
            <person name="Dacklin I."/>
            <person name="Grabbe C."/>
        </authorList>
    </citation>
    <scope>URMYLATION</scope>
    <scope>IDENTIFICATION BY MASS SPECTROMETRY</scope>
</reference>
<sequence length="250" mass="27692">MSHKIAAVCLLMSCLIATAYSAAKVPISIYYESLCPDSAKFITEQVYPAVKGELRDVVELTFVPFGKSQFVTQGSEVTFTCHHGPNECYGNKVHACAIEHIQANSYQVEYTRESLTMDFINCLMKAGKNFPDNVYPGQRCASENHINNWENIKTCANSTEGSVLLRKAGESTMRLKEPLTSVPTILFNEQFDKKVNDRAQVNLVGTICQYVSAPQPRICNQHNGASTPSLASVSAILSSLLGLWFIRSFY</sequence>
<gene>
    <name evidence="8" type="primary">GILT1</name>
    <name evidence="8" type="ORF">CG9796</name>
</gene>
<evidence type="ECO:0000255" key="1"/>
<evidence type="ECO:0000255" key="2">
    <source>
        <dbReference type="PROSITE-ProRule" id="PRU00498"/>
    </source>
</evidence>
<evidence type="ECO:0000269" key="3">
    <source>
    </source>
</evidence>
<evidence type="ECO:0000269" key="4">
    <source>
    </source>
</evidence>
<evidence type="ECO:0000305" key="5"/>
<evidence type="ECO:0000305" key="6">
    <source>
    </source>
</evidence>
<evidence type="ECO:0000312" key="7">
    <source>
        <dbReference type="EMBL" id="AAL29067.1"/>
    </source>
</evidence>
<evidence type="ECO:0000312" key="8">
    <source>
        <dbReference type="FlyBase" id="FBgn0038149"/>
    </source>
</evidence>
<evidence type="ECO:0000312" key="9">
    <source>
        <dbReference type="Proteomes" id="UP000000803"/>
    </source>
</evidence>
<proteinExistence type="evidence at protein level"/>
<name>GILT1_DROME</name>
<accession>Q95RA9</accession>
<accession>Q9VFV4</accession>
<dbReference type="EMBL" id="AE014297">
    <property type="protein sequence ID" value="AAF54945.2"/>
    <property type="molecule type" value="Genomic_DNA"/>
</dbReference>
<dbReference type="EMBL" id="AY061519">
    <property type="protein sequence ID" value="AAL29067.1"/>
    <property type="molecule type" value="mRNA"/>
</dbReference>
<dbReference type="RefSeq" id="NP_650287.3">
    <property type="nucleotide sequence ID" value="NM_142030.4"/>
</dbReference>
<dbReference type="SMR" id="Q95RA9"/>
<dbReference type="FunCoup" id="Q95RA9">
    <property type="interactions" value="215"/>
</dbReference>
<dbReference type="IntAct" id="Q95RA9">
    <property type="interactions" value="32"/>
</dbReference>
<dbReference type="STRING" id="7227.FBpp0082228"/>
<dbReference type="GlyCosmos" id="Q95RA9">
    <property type="glycosylation" value="1 site, No reported glycans"/>
</dbReference>
<dbReference type="GlyGen" id="Q95RA9">
    <property type="glycosylation" value="2 sites, 1 O-linked glycan (1 site)"/>
</dbReference>
<dbReference type="PaxDb" id="7227-FBpp0082228"/>
<dbReference type="DNASU" id="41650"/>
<dbReference type="EnsemblMetazoa" id="FBtr0082760">
    <property type="protein sequence ID" value="FBpp0082228"/>
    <property type="gene ID" value="FBgn0038149"/>
</dbReference>
<dbReference type="GeneID" id="41650"/>
<dbReference type="KEGG" id="dme:Dmel_CG9796"/>
<dbReference type="UCSC" id="CG9796-RA">
    <property type="organism name" value="d. melanogaster"/>
</dbReference>
<dbReference type="AGR" id="FB:FBgn0038149"/>
<dbReference type="CTD" id="41650"/>
<dbReference type="FlyBase" id="FBgn0038149">
    <property type="gene designation" value="GILT1"/>
</dbReference>
<dbReference type="VEuPathDB" id="VectorBase:FBgn0038149"/>
<dbReference type="eggNOG" id="KOG3160">
    <property type="taxonomic scope" value="Eukaryota"/>
</dbReference>
<dbReference type="HOGENOM" id="CLU_066886_2_1_1"/>
<dbReference type="InParanoid" id="Q95RA9"/>
<dbReference type="OMA" id="VNNWENI"/>
<dbReference type="OrthoDB" id="958254at2759"/>
<dbReference type="PhylomeDB" id="Q95RA9"/>
<dbReference type="BioGRID-ORCS" id="41650">
    <property type="hits" value="0 hits in 1 CRISPR screen"/>
</dbReference>
<dbReference type="ChiTaRS" id="GILT1">
    <property type="organism name" value="fly"/>
</dbReference>
<dbReference type="GenomeRNAi" id="41650"/>
<dbReference type="PRO" id="PR:Q95RA9"/>
<dbReference type="Proteomes" id="UP000000803">
    <property type="component" value="Chromosome 3R"/>
</dbReference>
<dbReference type="Bgee" id="FBgn0038149">
    <property type="expression patterns" value="Expressed in eye disc (Drosophila) and 165 other cell types or tissues"/>
</dbReference>
<dbReference type="GO" id="GO:0005576">
    <property type="term" value="C:extracellular region"/>
    <property type="evidence" value="ECO:0007669"/>
    <property type="project" value="UniProtKB-SubCell"/>
</dbReference>
<dbReference type="GO" id="GO:0005886">
    <property type="term" value="C:plasma membrane"/>
    <property type="evidence" value="ECO:0000314"/>
    <property type="project" value="FlyBase"/>
</dbReference>
<dbReference type="GO" id="GO:0016491">
    <property type="term" value="F:oxidoreductase activity"/>
    <property type="evidence" value="ECO:0000318"/>
    <property type="project" value="GO_Central"/>
</dbReference>
<dbReference type="GO" id="GO:0016667">
    <property type="term" value="F:oxidoreductase activity, acting on a sulfur group of donors"/>
    <property type="evidence" value="ECO:0000250"/>
    <property type="project" value="FlyBase"/>
</dbReference>
<dbReference type="GO" id="GO:0016671">
    <property type="term" value="F:oxidoreductase activity, acting on a sulfur group of donors, disulfide as acceptor"/>
    <property type="evidence" value="ECO:0007669"/>
    <property type="project" value="InterPro"/>
</dbReference>
<dbReference type="GO" id="GO:0002376">
    <property type="term" value="P:immune system process"/>
    <property type="evidence" value="ECO:0007669"/>
    <property type="project" value="UniProtKB-KW"/>
</dbReference>
<dbReference type="GO" id="GO:1900426">
    <property type="term" value="P:positive regulation of defense response to bacterium"/>
    <property type="evidence" value="ECO:0000315"/>
    <property type="project" value="FlyBase"/>
</dbReference>
<dbReference type="Gene3D" id="3.40.30.10">
    <property type="entry name" value="Glutaredoxin"/>
    <property type="match status" value="1"/>
</dbReference>
<dbReference type="InterPro" id="IPR004911">
    <property type="entry name" value="Interferon-induced_GILT"/>
</dbReference>
<dbReference type="PANTHER" id="PTHR13234">
    <property type="entry name" value="GAMMA-INTERFERON INDUCIBLE LYSOSOMAL THIOL REDUCTASE GILT"/>
    <property type="match status" value="1"/>
</dbReference>
<dbReference type="PANTHER" id="PTHR13234:SF69">
    <property type="entry name" value="GILT-LIKE PROTEIN 1"/>
    <property type="match status" value="1"/>
</dbReference>
<dbReference type="Pfam" id="PF03227">
    <property type="entry name" value="GILT"/>
    <property type="match status" value="1"/>
</dbReference>
<organism evidence="9">
    <name type="scientific">Drosophila melanogaster</name>
    <name type="common">Fruit fly</name>
    <dbReference type="NCBI Taxonomy" id="7227"/>
    <lineage>
        <taxon>Eukaryota</taxon>
        <taxon>Metazoa</taxon>
        <taxon>Ecdysozoa</taxon>
        <taxon>Arthropoda</taxon>
        <taxon>Hexapoda</taxon>
        <taxon>Insecta</taxon>
        <taxon>Pterygota</taxon>
        <taxon>Neoptera</taxon>
        <taxon>Endopterygota</taxon>
        <taxon>Diptera</taxon>
        <taxon>Brachycera</taxon>
        <taxon>Muscomorpha</taxon>
        <taxon>Ephydroidea</taxon>
        <taxon>Drosophilidae</taxon>
        <taxon>Drosophila</taxon>
        <taxon>Sophophora</taxon>
    </lineage>
</organism>
<feature type="signal peptide" evidence="1">
    <location>
        <begin position="1"/>
        <end position="21"/>
    </location>
</feature>
<feature type="chain" id="PRO_5008179656" description="GILT-like protein 1" evidence="1">
    <location>
        <begin position="22"/>
        <end position="250"/>
    </location>
</feature>
<feature type="glycosylation site" description="N-linked (GlcNAc...) asparagine" evidence="2">
    <location>
        <position position="157"/>
    </location>
</feature>
<comment type="function">
    <text evidence="3">Involved in the immune response to bacterial infection.</text>
</comment>
<comment type="subcellular location">
    <subcellularLocation>
        <location evidence="5">Secreted</location>
    </subcellularLocation>
</comment>
<comment type="induction">
    <text evidence="3">Up-regulated following injection with the Gram-negative bacterium E.coli. Up-regulation increases between 1 and 6 hours after the injection, then expression remains at a relatively steady level until 72 hours when it is strongly up-regulated.</text>
</comment>
<comment type="PTM">
    <text evidence="4">Conjugated to URM1, a ubiquitin-like protein.</text>
</comment>
<comment type="disruption phenotype">
    <text evidence="3">RNAi-mediated knockdown in the fat body or hemocyte of flies infected with the Gram-negative bacterium E.coli results in an increase in bacterial load 24 hours after infection.</text>
</comment>
<comment type="similarity">
    <text evidence="5">Belongs to the GILT family.</text>
</comment>
<comment type="caution">
    <text evidence="6">Lacks the conserved active site CXXC motif that is essential for thiol reductase activity. Its enzyme activity is therefore unsure.</text>
</comment>